<organism>
    <name type="scientific">Archaeoglobus fulgidus (strain ATCC 49558 / DSM 4304 / JCM 9628 / NBRC 100126 / VC-16)</name>
    <dbReference type="NCBI Taxonomy" id="224325"/>
    <lineage>
        <taxon>Archaea</taxon>
        <taxon>Methanobacteriati</taxon>
        <taxon>Methanobacteriota</taxon>
        <taxon>Archaeoglobi</taxon>
        <taxon>Archaeoglobales</taxon>
        <taxon>Archaeoglobaceae</taxon>
        <taxon>Archaeoglobus</taxon>
    </lineage>
</organism>
<sequence>MGGIMDARRLEDEVEMPLEGIVYGEVSGWLTIIGILVAIAGIIIGVVTGNSVFDYQSTIKDLLSGHDEEKIWTDDSIFHSEPHGYWFLNVIHTGDGIAMFGIALAVYGGIVGLLLLIVFTFRSREVLLYKKGLYTFLAIAIFCLMVYCAWEAEF</sequence>
<accession>O29246</accession>
<dbReference type="EMBL" id="AE000782">
    <property type="protein sequence ID" value="AAB90228.1"/>
    <property type="molecule type" value="Genomic_DNA"/>
</dbReference>
<dbReference type="PIR" id="H69376">
    <property type="entry name" value="H69376"/>
</dbReference>
<dbReference type="STRING" id="224325.AF_1016"/>
<dbReference type="PaxDb" id="224325-AF_1016"/>
<dbReference type="EnsemblBacteria" id="AAB90228">
    <property type="protein sequence ID" value="AAB90228"/>
    <property type="gene ID" value="AF_1016"/>
</dbReference>
<dbReference type="KEGG" id="afu:AF_1016"/>
<dbReference type="eggNOG" id="arCOG10391">
    <property type="taxonomic scope" value="Archaea"/>
</dbReference>
<dbReference type="HOGENOM" id="CLU_145809_0_0_2"/>
<dbReference type="Proteomes" id="UP000002199">
    <property type="component" value="Chromosome"/>
</dbReference>
<dbReference type="GO" id="GO:0005886">
    <property type="term" value="C:plasma membrane"/>
    <property type="evidence" value="ECO:0007669"/>
    <property type="project" value="UniProtKB-SubCell"/>
</dbReference>
<evidence type="ECO:0000255" key="1"/>
<evidence type="ECO:0000305" key="2"/>
<keyword id="KW-1003">Cell membrane</keyword>
<keyword id="KW-0472">Membrane</keyword>
<keyword id="KW-1185">Reference proteome</keyword>
<keyword id="KW-0812">Transmembrane</keyword>
<keyword id="KW-1133">Transmembrane helix</keyword>
<comment type="subcellular location">
    <subcellularLocation>
        <location evidence="2">Cell membrane</location>
        <topology evidence="2">Multi-pass membrane protein</topology>
    </subcellularLocation>
</comment>
<feature type="chain" id="PRO_0000127953" description="Uncharacterized protein AF_1016">
    <location>
        <begin position="1"/>
        <end position="154"/>
    </location>
</feature>
<feature type="transmembrane region" description="Helical" evidence="1">
    <location>
        <begin position="26"/>
        <end position="48"/>
    </location>
</feature>
<feature type="transmembrane region" description="Helical" evidence="1">
    <location>
        <begin position="97"/>
        <end position="119"/>
    </location>
</feature>
<feature type="transmembrane region" description="Helical" evidence="1">
    <location>
        <begin position="132"/>
        <end position="150"/>
    </location>
</feature>
<gene>
    <name type="ordered locus">AF_1016</name>
</gene>
<proteinExistence type="predicted"/>
<reference key="1">
    <citation type="journal article" date="1997" name="Nature">
        <title>The complete genome sequence of the hyperthermophilic, sulphate-reducing archaeon Archaeoglobus fulgidus.</title>
        <authorList>
            <person name="Klenk H.-P."/>
            <person name="Clayton R.A."/>
            <person name="Tomb J.-F."/>
            <person name="White O."/>
            <person name="Nelson K.E."/>
            <person name="Ketchum K.A."/>
            <person name="Dodson R.J."/>
            <person name="Gwinn M.L."/>
            <person name="Hickey E.K."/>
            <person name="Peterson J.D."/>
            <person name="Richardson D.L."/>
            <person name="Kerlavage A.R."/>
            <person name="Graham D.E."/>
            <person name="Kyrpides N.C."/>
            <person name="Fleischmann R.D."/>
            <person name="Quackenbush J."/>
            <person name="Lee N.H."/>
            <person name="Sutton G.G."/>
            <person name="Gill S.R."/>
            <person name="Kirkness E.F."/>
            <person name="Dougherty B.A."/>
            <person name="McKenney K."/>
            <person name="Adams M.D."/>
            <person name="Loftus B.J."/>
            <person name="Peterson S.N."/>
            <person name="Reich C.I."/>
            <person name="McNeil L.K."/>
            <person name="Badger J.H."/>
            <person name="Glodek A."/>
            <person name="Zhou L."/>
            <person name="Overbeek R."/>
            <person name="Gocayne J.D."/>
            <person name="Weidman J.F."/>
            <person name="McDonald L.A."/>
            <person name="Utterback T.R."/>
            <person name="Cotton M.D."/>
            <person name="Spriggs T."/>
            <person name="Artiach P."/>
            <person name="Kaine B.P."/>
            <person name="Sykes S.M."/>
            <person name="Sadow P.W."/>
            <person name="D'Andrea K.P."/>
            <person name="Bowman C."/>
            <person name="Fujii C."/>
            <person name="Garland S.A."/>
            <person name="Mason T.M."/>
            <person name="Olsen G.J."/>
            <person name="Fraser C.M."/>
            <person name="Smith H.O."/>
            <person name="Woese C.R."/>
            <person name="Venter J.C."/>
        </authorList>
    </citation>
    <scope>NUCLEOTIDE SEQUENCE [LARGE SCALE GENOMIC DNA]</scope>
    <source>
        <strain>ATCC 49558 / DSM 4304 / JCM 9628 / NBRC 100126 / VC-16</strain>
    </source>
</reference>
<name>Y1016_ARCFU</name>
<protein>
    <recommendedName>
        <fullName>Uncharacterized protein AF_1016</fullName>
    </recommendedName>
</protein>